<accession>Q5ADL0</accession>
<accession>A0A1D8PKR2</accession>
<name>PRP5_CANAL</name>
<dbReference type="EC" id="3.6.4.13"/>
<dbReference type="EMBL" id="CP017625">
    <property type="protein sequence ID" value="AOW28678.1"/>
    <property type="molecule type" value="Genomic_DNA"/>
</dbReference>
<dbReference type="RefSeq" id="XP_719923.1">
    <property type="nucleotide sequence ID" value="XM_714830.1"/>
</dbReference>
<dbReference type="SMR" id="Q5ADL0"/>
<dbReference type="FunCoup" id="Q5ADL0">
    <property type="interactions" value="1095"/>
</dbReference>
<dbReference type="STRING" id="237561.Q5ADL0"/>
<dbReference type="EnsemblFungi" id="C3_06720W_A-T">
    <property type="protein sequence ID" value="C3_06720W_A-T-p1"/>
    <property type="gene ID" value="C3_06720W_A"/>
</dbReference>
<dbReference type="GeneID" id="3638447"/>
<dbReference type="KEGG" id="cal:CAALFM_C306720WA"/>
<dbReference type="CGD" id="CAL0000188191">
    <property type="gene designation" value="PRP5"/>
</dbReference>
<dbReference type="VEuPathDB" id="FungiDB:C3_06720W_A"/>
<dbReference type="eggNOG" id="KOG0334">
    <property type="taxonomic scope" value="Eukaryota"/>
</dbReference>
<dbReference type="HOGENOM" id="CLU_003041_0_2_1"/>
<dbReference type="InParanoid" id="Q5ADL0"/>
<dbReference type="OMA" id="FAQYVHT"/>
<dbReference type="OrthoDB" id="196131at2759"/>
<dbReference type="PRO" id="PR:Q5ADL0"/>
<dbReference type="Proteomes" id="UP000000559">
    <property type="component" value="Chromosome 3"/>
</dbReference>
<dbReference type="GO" id="GO:0005634">
    <property type="term" value="C:nucleus"/>
    <property type="evidence" value="ECO:0000318"/>
    <property type="project" value="GO_Central"/>
</dbReference>
<dbReference type="GO" id="GO:0005524">
    <property type="term" value="F:ATP binding"/>
    <property type="evidence" value="ECO:0007669"/>
    <property type="project" value="UniProtKB-KW"/>
</dbReference>
<dbReference type="GO" id="GO:0016887">
    <property type="term" value="F:ATP hydrolysis activity"/>
    <property type="evidence" value="ECO:0007669"/>
    <property type="project" value="RHEA"/>
</dbReference>
<dbReference type="GO" id="GO:0003676">
    <property type="term" value="F:nucleic acid binding"/>
    <property type="evidence" value="ECO:0007669"/>
    <property type="project" value="InterPro"/>
</dbReference>
<dbReference type="GO" id="GO:0003724">
    <property type="term" value="F:RNA helicase activity"/>
    <property type="evidence" value="ECO:0007669"/>
    <property type="project" value="UniProtKB-EC"/>
</dbReference>
<dbReference type="GO" id="GO:0000398">
    <property type="term" value="P:mRNA splicing, via spliceosome"/>
    <property type="evidence" value="ECO:0000318"/>
    <property type="project" value="GO_Central"/>
</dbReference>
<dbReference type="CDD" id="cd17953">
    <property type="entry name" value="DEADc_DDX46"/>
    <property type="match status" value="1"/>
</dbReference>
<dbReference type="CDD" id="cd18787">
    <property type="entry name" value="SF2_C_DEAD"/>
    <property type="match status" value="1"/>
</dbReference>
<dbReference type="FunFam" id="3.40.50.300:FF:000079">
    <property type="entry name" value="probable ATP-dependent RNA helicase DDX17"/>
    <property type="match status" value="1"/>
</dbReference>
<dbReference type="Gene3D" id="3.40.50.300">
    <property type="entry name" value="P-loop containing nucleotide triphosphate hydrolases"/>
    <property type="match status" value="2"/>
</dbReference>
<dbReference type="InterPro" id="IPR011545">
    <property type="entry name" value="DEAD/DEAH_box_helicase_dom"/>
</dbReference>
<dbReference type="InterPro" id="IPR014001">
    <property type="entry name" value="Helicase_ATP-bd"/>
</dbReference>
<dbReference type="InterPro" id="IPR001650">
    <property type="entry name" value="Helicase_C-like"/>
</dbReference>
<dbReference type="InterPro" id="IPR027417">
    <property type="entry name" value="P-loop_NTPase"/>
</dbReference>
<dbReference type="InterPro" id="IPR056149">
    <property type="entry name" value="PRP5/DDX46/KHDC4_KH"/>
</dbReference>
<dbReference type="InterPro" id="IPR000629">
    <property type="entry name" value="RNA-helicase_DEAD-box_CS"/>
</dbReference>
<dbReference type="InterPro" id="IPR014014">
    <property type="entry name" value="RNA_helicase_DEAD_Q_motif"/>
</dbReference>
<dbReference type="PANTHER" id="PTHR47958">
    <property type="entry name" value="ATP-DEPENDENT RNA HELICASE DBP3"/>
    <property type="match status" value="1"/>
</dbReference>
<dbReference type="Pfam" id="PF00270">
    <property type="entry name" value="DEAD"/>
    <property type="match status" value="1"/>
</dbReference>
<dbReference type="Pfam" id="PF00271">
    <property type="entry name" value="Helicase_C"/>
    <property type="match status" value="1"/>
</dbReference>
<dbReference type="Pfam" id="PF23469">
    <property type="entry name" value="KH_12"/>
    <property type="match status" value="1"/>
</dbReference>
<dbReference type="SMART" id="SM00487">
    <property type="entry name" value="DEXDc"/>
    <property type="match status" value="1"/>
</dbReference>
<dbReference type="SMART" id="SM00490">
    <property type="entry name" value="HELICc"/>
    <property type="match status" value="1"/>
</dbReference>
<dbReference type="SUPFAM" id="SSF52540">
    <property type="entry name" value="P-loop containing nucleoside triphosphate hydrolases"/>
    <property type="match status" value="2"/>
</dbReference>
<dbReference type="PROSITE" id="PS00039">
    <property type="entry name" value="DEAD_ATP_HELICASE"/>
    <property type="match status" value="1"/>
</dbReference>
<dbReference type="PROSITE" id="PS51192">
    <property type="entry name" value="HELICASE_ATP_BIND_1"/>
    <property type="match status" value="1"/>
</dbReference>
<dbReference type="PROSITE" id="PS51194">
    <property type="entry name" value="HELICASE_CTER"/>
    <property type="match status" value="1"/>
</dbReference>
<dbReference type="PROSITE" id="PS51195">
    <property type="entry name" value="Q_MOTIF"/>
    <property type="match status" value="1"/>
</dbReference>
<comment type="function">
    <text evidence="1">ATP-dependent RNA helicase involved spliceosome assembly and in nuclear splicing. Catalyzes an ATP-dependent conformational change of U2 snRNP. Bridges U1 and U2 snRNPs and enables stable U2 snRNP association with intron RNA (By similarity).</text>
</comment>
<comment type="catalytic activity">
    <reaction>
        <text>ATP + H2O = ADP + phosphate + H(+)</text>
        <dbReference type="Rhea" id="RHEA:13065"/>
        <dbReference type="ChEBI" id="CHEBI:15377"/>
        <dbReference type="ChEBI" id="CHEBI:15378"/>
        <dbReference type="ChEBI" id="CHEBI:30616"/>
        <dbReference type="ChEBI" id="CHEBI:43474"/>
        <dbReference type="ChEBI" id="CHEBI:456216"/>
        <dbReference type="EC" id="3.6.4.13"/>
    </reaction>
</comment>
<comment type="subcellular location">
    <subcellularLocation>
        <location evidence="1">Nucleus</location>
    </subcellularLocation>
</comment>
<comment type="domain">
    <text>The Q motif is unique to and characteristic of the DEAD box family of RNA helicases and controls ATP binding and hydrolysis.</text>
</comment>
<comment type="similarity">
    <text evidence="5">Belongs to the DEAD box helicase family. DDX46/PRP5 subfamily.</text>
</comment>
<feature type="chain" id="PRO_0000232359" description="Pre-mRNA-processing ATP-dependent RNA helicase PRP5">
    <location>
        <begin position="1"/>
        <end position="884"/>
    </location>
</feature>
<feature type="domain" description="Helicase ATP-binding" evidence="2">
    <location>
        <begin position="325"/>
        <end position="504"/>
    </location>
</feature>
<feature type="domain" description="Helicase C-terminal" evidence="3">
    <location>
        <begin position="540"/>
        <end position="690"/>
    </location>
</feature>
<feature type="region of interest" description="Disordered" evidence="4">
    <location>
        <begin position="1"/>
        <end position="220"/>
    </location>
</feature>
<feature type="region of interest" description="Disordered" evidence="4">
    <location>
        <begin position="727"/>
        <end position="754"/>
    </location>
</feature>
<feature type="short sequence motif" description="Q motif">
    <location>
        <begin position="293"/>
        <end position="322"/>
    </location>
</feature>
<feature type="short sequence motif" description="DEAD box">
    <location>
        <begin position="452"/>
        <end position="455"/>
    </location>
</feature>
<feature type="compositionally biased region" description="Polar residues" evidence="4">
    <location>
        <begin position="1"/>
        <end position="25"/>
    </location>
</feature>
<feature type="compositionally biased region" description="Basic and acidic residues" evidence="4">
    <location>
        <begin position="28"/>
        <end position="45"/>
    </location>
</feature>
<feature type="compositionally biased region" description="Basic and acidic residues" evidence="4">
    <location>
        <begin position="58"/>
        <end position="67"/>
    </location>
</feature>
<feature type="compositionally biased region" description="Basic and acidic residues" evidence="4">
    <location>
        <begin position="75"/>
        <end position="90"/>
    </location>
</feature>
<feature type="compositionally biased region" description="Basic and acidic residues" evidence="4">
    <location>
        <begin position="173"/>
        <end position="188"/>
    </location>
</feature>
<feature type="compositionally biased region" description="Acidic residues" evidence="4">
    <location>
        <begin position="192"/>
        <end position="217"/>
    </location>
</feature>
<feature type="compositionally biased region" description="Basic and acidic residues" evidence="4">
    <location>
        <begin position="739"/>
        <end position="750"/>
    </location>
</feature>
<feature type="binding site" evidence="2">
    <location>
        <begin position="338"/>
        <end position="345"/>
    </location>
    <ligand>
        <name>ATP</name>
        <dbReference type="ChEBI" id="CHEBI:30616"/>
    </ligand>
</feature>
<evidence type="ECO:0000250" key="1"/>
<evidence type="ECO:0000255" key="2">
    <source>
        <dbReference type="PROSITE-ProRule" id="PRU00541"/>
    </source>
</evidence>
<evidence type="ECO:0000255" key="3">
    <source>
        <dbReference type="PROSITE-ProRule" id="PRU00542"/>
    </source>
</evidence>
<evidence type="ECO:0000256" key="4">
    <source>
        <dbReference type="SAM" id="MobiDB-lite"/>
    </source>
</evidence>
<evidence type="ECO:0000305" key="5"/>
<protein>
    <recommendedName>
        <fullName>Pre-mRNA-processing ATP-dependent RNA helicase PRP5</fullName>
        <ecNumber>3.6.4.13</ecNumber>
    </recommendedName>
</protein>
<proteinExistence type="inferred from homology"/>
<keyword id="KW-0067">ATP-binding</keyword>
<keyword id="KW-0347">Helicase</keyword>
<keyword id="KW-0378">Hydrolase</keyword>
<keyword id="KW-0507">mRNA processing</keyword>
<keyword id="KW-0508">mRNA splicing</keyword>
<keyword id="KW-0547">Nucleotide-binding</keyword>
<keyword id="KW-0539">Nucleus</keyword>
<keyword id="KW-1185">Reference proteome</keyword>
<organism>
    <name type="scientific">Candida albicans (strain SC5314 / ATCC MYA-2876)</name>
    <name type="common">Yeast</name>
    <dbReference type="NCBI Taxonomy" id="237561"/>
    <lineage>
        <taxon>Eukaryota</taxon>
        <taxon>Fungi</taxon>
        <taxon>Dikarya</taxon>
        <taxon>Ascomycota</taxon>
        <taxon>Saccharomycotina</taxon>
        <taxon>Pichiomycetes</taxon>
        <taxon>Debaryomycetaceae</taxon>
        <taxon>Candida/Lodderomyces clade</taxon>
        <taxon>Candida</taxon>
    </lineage>
</organism>
<reference key="1">
    <citation type="journal article" date="2004" name="Proc. Natl. Acad. Sci. U.S.A.">
        <title>The diploid genome sequence of Candida albicans.</title>
        <authorList>
            <person name="Jones T."/>
            <person name="Federspiel N.A."/>
            <person name="Chibana H."/>
            <person name="Dungan J."/>
            <person name="Kalman S."/>
            <person name="Magee B.B."/>
            <person name="Newport G."/>
            <person name="Thorstenson Y.R."/>
            <person name="Agabian N."/>
            <person name="Magee P.T."/>
            <person name="Davis R.W."/>
            <person name="Scherer S."/>
        </authorList>
    </citation>
    <scope>NUCLEOTIDE SEQUENCE [LARGE SCALE GENOMIC DNA]</scope>
    <source>
        <strain>SC5314 / ATCC MYA-2876</strain>
    </source>
</reference>
<reference key="2">
    <citation type="journal article" date="2007" name="Genome Biol.">
        <title>Assembly of the Candida albicans genome into sixteen supercontigs aligned on the eight chromosomes.</title>
        <authorList>
            <person name="van het Hoog M."/>
            <person name="Rast T.J."/>
            <person name="Martchenko M."/>
            <person name="Grindle S."/>
            <person name="Dignard D."/>
            <person name="Hogues H."/>
            <person name="Cuomo C."/>
            <person name="Berriman M."/>
            <person name="Scherer S."/>
            <person name="Magee B.B."/>
            <person name="Whiteway M."/>
            <person name="Chibana H."/>
            <person name="Nantel A."/>
            <person name="Magee P.T."/>
        </authorList>
    </citation>
    <scope>GENOME REANNOTATION</scope>
    <source>
        <strain>SC5314 / ATCC MYA-2876</strain>
    </source>
</reference>
<reference key="3">
    <citation type="journal article" date="2013" name="Genome Biol.">
        <title>Assembly of a phased diploid Candida albicans genome facilitates allele-specific measurements and provides a simple model for repeat and indel structure.</title>
        <authorList>
            <person name="Muzzey D."/>
            <person name="Schwartz K."/>
            <person name="Weissman J.S."/>
            <person name="Sherlock G."/>
        </authorList>
    </citation>
    <scope>NUCLEOTIDE SEQUENCE [LARGE SCALE GENOMIC DNA]</scope>
    <scope>GENOME REANNOTATION</scope>
    <source>
        <strain>SC5314 / ATCC MYA-2876</strain>
    </source>
</reference>
<sequence length="884" mass="100398">MSIDNQASTALKNSGQEVKNNTNQTSELSKEEKLRKRREQLELWRQKKQQQQQEQEEVQNKAKKTEDSTNNTSTEEVKKSRQQRIEEWKRARLQKQQATKEKTTTITIKKKVHSQTTRPTLKRNLDFGDDEDDRKNSHRPVFKKPSLEYDEISEHQNDKESEDELDVFLASIRESELKSDNTKAEKAIESIPEGDVENEKENDDYGGDGDEEDESDEESRLQDLISTKLTKLQNKGKELQSIDHSQENYQEFRKVFYREAYELSALSDEQVELIRQDLDNIKVKGTDVPRPILKWSHLALPTNLSSVIHDKLKFEKPSAIQSQALPTILSGRDVIGIAKTGSGKTLSYVLPMLRHIQDQQFSKDNQGPIGLILSPTRELALQIEKEILNFTKRNNNLRVCCCYGGSSIENQINELKKGVEIIVGTPGRVIDLLAANSGRVLNLKRCTFVVLDEADRMFDLGFEPQVNKILTQIRPDRQTVLFSATFPRKMETLAKQILTDPVVIIVGGISVVAPEIKQEVVLFETSAEEQDKYKQQRVEKLHDILTNYQIEHPDSKILVFTEKQNDADELVANLLSNKYPAIAIHGGKDQMDRKYAIKEFASMDSGINILIATSIAARGLDVRNLGLVINFDPPNHMEDYVHRVGRTGRAGAKGNAITFVSSSQPKEVFNLVKALKLSHSDIDPKLEEIANKFVTKVKAGKEKISSGFGGKGLDNLQEVRDNKLKLEKQRFGDQQPQRQQEETETKKSNDEPVPDIALPEFNIIEGNTPETSGPDKCKFYCRIVINDLPQKVRWNIVQRESLSKIIDESRTSITTRGQYYPPGSKPLSNDQERNGSLAKLYLLVEGLTLQSVTEAITLIKKKMLESLDILNQRENLQPTGRYVV</sequence>
<gene>
    <name type="primary">PRP5</name>
    <name type="ordered locus">CAALFM_C306720WA</name>
    <name type="ORF">CaO19.14123</name>
    <name type="ORF">CaO19.6831</name>
</gene>